<evidence type="ECO:0000250" key="1"/>
<evidence type="ECO:0000250" key="2">
    <source>
        <dbReference type="UniProtKB" id="B2HS63"/>
    </source>
</evidence>
<evidence type="ECO:0000305" key="3"/>
<name>LOG6_ARATH</name>
<dbReference type="EC" id="3.2.2.n1"/>
<dbReference type="EMBL" id="AB005240">
    <property type="protein sequence ID" value="BAB08387.1"/>
    <property type="status" value="ALT_SEQ"/>
    <property type="molecule type" value="Genomic_DNA"/>
</dbReference>
<dbReference type="EMBL" id="AL163002">
    <property type="protein sequence ID" value="CAB86094.1"/>
    <property type="molecule type" value="Genomic_DNA"/>
</dbReference>
<dbReference type="EMBL" id="CP002688">
    <property type="protein sequence ID" value="AED90579.2"/>
    <property type="molecule type" value="Genomic_DNA"/>
</dbReference>
<dbReference type="PIR" id="T48348">
    <property type="entry name" value="T48348"/>
</dbReference>
<dbReference type="RefSeq" id="NP_001318465.1">
    <property type="nucleotide sequence ID" value="NM_001342694.1"/>
</dbReference>
<dbReference type="SMR" id="Q9LYV8"/>
<dbReference type="STRING" id="3702.Q9LYV8"/>
<dbReference type="EnsemblPlants" id="AT5G03270.1">
    <property type="protein sequence ID" value="AT5G03270.1"/>
    <property type="gene ID" value="AT5G03270"/>
</dbReference>
<dbReference type="GeneID" id="831890"/>
<dbReference type="Gramene" id="AT5G03270.1">
    <property type="protein sequence ID" value="AT5G03270.1"/>
    <property type="gene ID" value="AT5G03270"/>
</dbReference>
<dbReference type="KEGG" id="ath:AT5G03270"/>
<dbReference type="Araport" id="AT5G03270"/>
<dbReference type="TAIR" id="AT5G03270">
    <property type="gene designation" value="LOG6"/>
</dbReference>
<dbReference type="InParanoid" id="Q9LYV8"/>
<dbReference type="OMA" id="WEVERPI"/>
<dbReference type="OrthoDB" id="414463at2759"/>
<dbReference type="PhylomeDB" id="Q9LYV8"/>
<dbReference type="PRO" id="PR:Q9LYV8"/>
<dbReference type="Proteomes" id="UP000006548">
    <property type="component" value="Chromosome 5"/>
</dbReference>
<dbReference type="ExpressionAtlas" id="Q9LYV8">
    <property type="expression patterns" value="baseline and differential"/>
</dbReference>
<dbReference type="GO" id="GO:0005829">
    <property type="term" value="C:cytosol"/>
    <property type="evidence" value="ECO:0007669"/>
    <property type="project" value="UniProtKB-ARBA"/>
</dbReference>
<dbReference type="GO" id="GO:0005634">
    <property type="term" value="C:nucleus"/>
    <property type="evidence" value="ECO:0007669"/>
    <property type="project" value="UniProtKB-ARBA"/>
</dbReference>
<dbReference type="GO" id="GO:0102682">
    <property type="term" value="F:cytokinin riboside 5'-monophosphate phosphoribohydrolase activity"/>
    <property type="evidence" value="ECO:0007669"/>
    <property type="project" value="RHEA"/>
</dbReference>
<dbReference type="GO" id="GO:0009691">
    <property type="term" value="P:cytokinin biosynthetic process"/>
    <property type="evidence" value="ECO:0007669"/>
    <property type="project" value="UniProtKB-KW"/>
</dbReference>
<dbReference type="FunFam" id="3.40.50.450:FF:000005">
    <property type="entry name" value="CASP-like protein"/>
    <property type="match status" value="1"/>
</dbReference>
<dbReference type="Gene3D" id="3.40.50.450">
    <property type="match status" value="1"/>
</dbReference>
<dbReference type="InterPro" id="IPR005269">
    <property type="entry name" value="LOG"/>
</dbReference>
<dbReference type="InterPro" id="IPR031100">
    <property type="entry name" value="LOG_fam"/>
</dbReference>
<dbReference type="NCBIfam" id="TIGR00730">
    <property type="entry name" value="Rossman fold protein, TIGR00730 family"/>
    <property type="match status" value="1"/>
</dbReference>
<dbReference type="PANTHER" id="PTHR31223:SF90">
    <property type="entry name" value="CYTOKININ RIBOSIDE 5'-MONOPHOSPHATE PHOSPHORIBOHYDROLASE LOG6-RELATED"/>
    <property type="match status" value="1"/>
</dbReference>
<dbReference type="PANTHER" id="PTHR31223">
    <property type="entry name" value="LOG FAMILY PROTEIN YJL055W"/>
    <property type="match status" value="1"/>
</dbReference>
<dbReference type="Pfam" id="PF03641">
    <property type="entry name" value="Lysine_decarbox"/>
    <property type="match status" value="1"/>
</dbReference>
<dbReference type="SUPFAM" id="SSF102405">
    <property type="entry name" value="MCP/YpsA-like"/>
    <property type="match status" value="1"/>
</dbReference>
<sequence>MENEEGKREMTKKQSSRFKSICVFCGSSNGNKASYQDAAIDLAKELVMRKIDLVYGGGSIGLMGLVSQAVHDGGRHVIGVIPKLLMLQELTGETVGEVKEVADMHQRKAVMAKHSDAFITLPGGYGTLEELLEVITWAQLGIHDKPVGLLNVDGYYDALLLFIDKAVEEGFILPTARHIIVSAPTARELFIKLEEYVPQHK</sequence>
<feature type="chain" id="PRO_0000395049" description="Probable cytokinin riboside 5'-monophosphate phosphoribohydrolase LOG6">
    <location>
        <begin position="1"/>
        <end position="201"/>
    </location>
</feature>
<feature type="binding site" evidence="2">
    <location>
        <position position="89"/>
    </location>
    <ligand>
        <name>substrate</name>
    </ligand>
</feature>
<feature type="binding site" evidence="2">
    <location>
        <begin position="107"/>
        <end position="108"/>
    </location>
    <ligand>
        <name>substrate</name>
    </ligand>
</feature>
<feature type="binding site" evidence="2">
    <location>
        <begin position="124"/>
        <end position="130"/>
    </location>
    <ligand>
        <name>substrate</name>
    </ligand>
</feature>
<feature type="binding site" evidence="2">
    <location>
        <position position="136"/>
    </location>
    <ligand>
        <name>substrate</name>
    </ligand>
</feature>
<accession>Q9LYV8</accession>
<accession>F4KF91</accession>
<accession>Q9FYM7</accession>
<organism>
    <name type="scientific">Arabidopsis thaliana</name>
    <name type="common">Mouse-ear cress</name>
    <dbReference type="NCBI Taxonomy" id="3702"/>
    <lineage>
        <taxon>Eukaryota</taxon>
        <taxon>Viridiplantae</taxon>
        <taxon>Streptophyta</taxon>
        <taxon>Embryophyta</taxon>
        <taxon>Tracheophyta</taxon>
        <taxon>Spermatophyta</taxon>
        <taxon>Magnoliopsida</taxon>
        <taxon>eudicotyledons</taxon>
        <taxon>Gunneridae</taxon>
        <taxon>Pentapetalae</taxon>
        <taxon>rosids</taxon>
        <taxon>malvids</taxon>
        <taxon>Brassicales</taxon>
        <taxon>Brassicaceae</taxon>
        <taxon>Camelineae</taxon>
        <taxon>Arabidopsis</taxon>
    </lineage>
</organism>
<comment type="function">
    <text evidence="1">Cytokinin-activating enzyme working in the direct activation pathway. Phosphoribohydrolase that converts inactive cytokinin nucleotides to the biologically active free-base forms (By similarity).</text>
</comment>
<comment type="catalytic activity">
    <reaction>
        <text>N(6)-(dimethylallyl)adenosine 5'-phosphate + H2O = N(6)-dimethylallyladenine + D-ribose 5-phosphate</text>
        <dbReference type="Rhea" id="RHEA:48560"/>
        <dbReference type="ChEBI" id="CHEBI:15377"/>
        <dbReference type="ChEBI" id="CHEBI:17660"/>
        <dbReference type="ChEBI" id="CHEBI:57526"/>
        <dbReference type="ChEBI" id="CHEBI:78346"/>
        <dbReference type="EC" id="3.2.2.n1"/>
    </reaction>
</comment>
<comment type="catalytic activity">
    <reaction>
        <text>9-ribosyl-trans-zeatin 5'-phosphate + H2O = trans-zeatin + D-ribose 5-phosphate</text>
        <dbReference type="Rhea" id="RHEA:48564"/>
        <dbReference type="ChEBI" id="CHEBI:15377"/>
        <dbReference type="ChEBI" id="CHEBI:16522"/>
        <dbReference type="ChEBI" id="CHEBI:78346"/>
        <dbReference type="ChEBI" id="CHEBI:87947"/>
        <dbReference type="EC" id="3.2.2.n1"/>
    </reaction>
</comment>
<comment type="similarity">
    <text evidence="3">Belongs to the LOG family.</text>
</comment>
<comment type="sequence caution" evidence="3">
    <conflict type="erroneous gene model prediction">
        <sequence resource="EMBL-CDS" id="BAB08387"/>
    </conflict>
</comment>
<proteinExistence type="inferred from homology"/>
<gene>
    <name type="primary">LOG6</name>
    <name type="ordered locus">At5g03270</name>
    <name type="ORF">F15A17.300</name>
</gene>
<keyword id="KW-0203">Cytokinin biosynthesis</keyword>
<keyword id="KW-0378">Hydrolase</keyword>
<keyword id="KW-1185">Reference proteome</keyword>
<protein>
    <recommendedName>
        <fullName>Probable cytokinin riboside 5'-monophosphate phosphoribohydrolase LOG6</fullName>
        <ecNumber>3.2.2.n1</ecNumber>
    </recommendedName>
    <alternativeName>
        <fullName>Protein LONELY GUY 6</fullName>
    </alternativeName>
</protein>
<reference key="1">
    <citation type="journal article" date="1997" name="DNA Res.">
        <title>Structural analysis of Arabidopsis thaliana chromosome 5. I. Sequence features of the 1.6 Mb regions covered by twenty physically assigned P1 clones.</title>
        <authorList>
            <person name="Sato S."/>
            <person name="Kotani H."/>
            <person name="Nakamura Y."/>
            <person name="Kaneko T."/>
            <person name="Asamizu E."/>
            <person name="Fukami M."/>
            <person name="Miyajima N."/>
            <person name="Tabata S."/>
        </authorList>
    </citation>
    <scope>NUCLEOTIDE SEQUENCE [LARGE SCALE GENOMIC DNA]</scope>
    <source>
        <strain>cv. Columbia</strain>
    </source>
</reference>
<reference key="2">
    <citation type="journal article" date="2000" name="Nature">
        <title>Sequence and analysis of chromosome 5 of the plant Arabidopsis thaliana.</title>
        <authorList>
            <person name="Tabata S."/>
            <person name="Kaneko T."/>
            <person name="Nakamura Y."/>
            <person name="Kotani H."/>
            <person name="Kato T."/>
            <person name="Asamizu E."/>
            <person name="Miyajima N."/>
            <person name="Sasamoto S."/>
            <person name="Kimura T."/>
            <person name="Hosouchi T."/>
            <person name="Kawashima K."/>
            <person name="Kohara M."/>
            <person name="Matsumoto M."/>
            <person name="Matsuno A."/>
            <person name="Muraki A."/>
            <person name="Nakayama S."/>
            <person name="Nakazaki N."/>
            <person name="Naruo K."/>
            <person name="Okumura S."/>
            <person name="Shinpo S."/>
            <person name="Takeuchi C."/>
            <person name="Wada T."/>
            <person name="Watanabe A."/>
            <person name="Yamada M."/>
            <person name="Yasuda M."/>
            <person name="Sato S."/>
            <person name="de la Bastide M."/>
            <person name="Huang E."/>
            <person name="Spiegel L."/>
            <person name="Gnoj L."/>
            <person name="O'Shaughnessy A."/>
            <person name="Preston R."/>
            <person name="Habermann K."/>
            <person name="Murray J."/>
            <person name="Johnson D."/>
            <person name="Rohlfing T."/>
            <person name="Nelson J."/>
            <person name="Stoneking T."/>
            <person name="Pepin K."/>
            <person name="Spieth J."/>
            <person name="Sekhon M."/>
            <person name="Armstrong J."/>
            <person name="Becker M."/>
            <person name="Belter E."/>
            <person name="Cordum H."/>
            <person name="Cordes M."/>
            <person name="Courtney L."/>
            <person name="Courtney W."/>
            <person name="Dante M."/>
            <person name="Du H."/>
            <person name="Edwards J."/>
            <person name="Fryman J."/>
            <person name="Haakensen B."/>
            <person name="Lamar E."/>
            <person name="Latreille P."/>
            <person name="Leonard S."/>
            <person name="Meyer R."/>
            <person name="Mulvaney E."/>
            <person name="Ozersky P."/>
            <person name="Riley A."/>
            <person name="Strowmatt C."/>
            <person name="Wagner-McPherson C."/>
            <person name="Wollam A."/>
            <person name="Yoakum M."/>
            <person name="Bell M."/>
            <person name="Dedhia N."/>
            <person name="Parnell L."/>
            <person name="Shah R."/>
            <person name="Rodriguez M."/>
            <person name="Hoon See L."/>
            <person name="Vil D."/>
            <person name="Baker J."/>
            <person name="Kirchoff K."/>
            <person name="Toth K."/>
            <person name="King L."/>
            <person name="Bahret A."/>
            <person name="Miller B."/>
            <person name="Marra M.A."/>
            <person name="Martienssen R."/>
            <person name="McCombie W.R."/>
            <person name="Wilson R.K."/>
            <person name="Murphy G."/>
            <person name="Bancroft I."/>
            <person name="Volckaert G."/>
            <person name="Wambutt R."/>
            <person name="Duesterhoeft A."/>
            <person name="Stiekema W."/>
            <person name="Pohl T."/>
            <person name="Entian K.-D."/>
            <person name="Terryn N."/>
            <person name="Hartley N."/>
            <person name="Bent E."/>
            <person name="Johnson S."/>
            <person name="Langham S.-A."/>
            <person name="McCullagh B."/>
            <person name="Robben J."/>
            <person name="Grymonprez B."/>
            <person name="Zimmermann W."/>
            <person name="Ramsperger U."/>
            <person name="Wedler H."/>
            <person name="Balke K."/>
            <person name="Wedler E."/>
            <person name="Peters S."/>
            <person name="van Staveren M."/>
            <person name="Dirkse W."/>
            <person name="Mooijman P."/>
            <person name="Klein Lankhorst R."/>
            <person name="Weitzenegger T."/>
            <person name="Bothe G."/>
            <person name="Rose M."/>
            <person name="Hauf J."/>
            <person name="Berneiser S."/>
            <person name="Hempel S."/>
            <person name="Feldpausch M."/>
            <person name="Lamberth S."/>
            <person name="Villarroel R."/>
            <person name="Gielen J."/>
            <person name="Ardiles W."/>
            <person name="Bents O."/>
            <person name="Lemcke K."/>
            <person name="Kolesov G."/>
            <person name="Mayer K.F.X."/>
            <person name="Rudd S."/>
            <person name="Schoof H."/>
            <person name="Schueller C."/>
            <person name="Zaccaria P."/>
            <person name="Mewes H.-W."/>
            <person name="Bevan M."/>
            <person name="Fransz P.F."/>
        </authorList>
    </citation>
    <scope>NUCLEOTIDE SEQUENCE [LARGE SCALE GENOMIC DNA]</scope>
    <source>
        <strain>cv. Columbia</strain>
    </source>
</reference>
<reference key="3">
    <citation type="journal article" date="2017" name="Plant J.">
        <title>Araport11: a complete reannotation of the Arabidopsis thaliana reference genome.</title>
        <authorList>
            <person name="Cheng C.Y."/>
            <person name="Krishnakumar V."/>
            <person name="Chan A.P."/>
            <person name="Thibaud-Nissen F."/>
            <person name="Schobel S."/>
            <person name="Town C.D."/>
        </authorList>
    </citation>
    <scope>GENOME REANNOTATION</scope>
    <source>
        <strain>cv. Columbia</strain>
    </source>
</reference>
<reference key="4">
    <citation type="journal article" date="2007" name="Nature">
        <title>Direct control of shoot meristem activity by a cytokinin-activating enzyme.</title>
        <authorList>
            <person name="Kurakawa T."/>
            <person name="Ueda N."/>
            <person name="Maekawa M."/>
            <person name="Kobayashi K."/>
            <person name="Kojima M."/>
            <person name="Nagato Y."/>
            <person name="Sakakibara H."/>
            <person name="Kyozuka J."/>
        </authorList>
    </citation>
    <scope>IDENTIFICATION</scope>
</reference>
<reference key="5">
    <citation type="journal article" date="2009" name="Plant Cell">
        <title>Functional analyses of LONELY GUY cytokinin-activating enzymes reveal the importance of the direct activation pathway in Arabidopsis.</title>
        <authorList>
            <person name="Kuroha T."/>
            <person name="Tokunaga H."/>
            <person name="Kojima M."/>
            <person name="Ueda N."/>
            <person name="Ishida T."/>
            <person name="Nagawa S."/>
            <person name="Fukuda H."/>
            <person name="Sugimoto K."/>
            <person name="Sakakibara H."/>
        </authorList>
    </citation>
    <scope>GENE FAMILY</scope>
    <scope>NOMENCLATURE</scope>
</reference>